<comment type="function">
    <text evidence="2">Has high formaldehyde dehydrogenase activity in the presence of glutathione and catalyzes the oxidation of normal alcohols in a reaction that is not GSH-dependent. In addition, hemithiolacetals other than those formed from GSH, including omega-thiol fatty acids, also are substrates. Also acts as a S-nitroso-glutathione reductase by catalyzing the NADH-dependent reduction of S-nitrosoglutathione.</text>
</comment>
<comment type="catalytic activity">
    <reaction evidence="2">
        <text>S-(hydroxymethyl)glutathione + NADP(+) = S-formylglutathione + NADPH + H(+)</text>
        <dbReference type="Rhea" id="RHEA:19981"/>
        <dbReference type="ChEBI" id="CHEBI:15378"/>
        <dbReference type="ChEBI" id="CHEBI:57688"/>
        <dbReference type="ChEBI" id="CHEBI:57783"/>
        <dbReference type="ChEBI" id="CHEBI:58349"/>
        <dbReference type="ChEBI" id="CHEBI:58758"/>
        <dbReference type="EC" id="1.1.1.284"/>
    </reaction>
</comment>
<comment type="catalytic activity">
    <reaction evidence="2">
        <text>S-(hydroxymethyl)glutathione + NAD(+) = S-formylglutathione + NADH + H(+)</text>
        <dbReference type="Rhea" id="RHEA:19985"/>
        <dbReference type="ChEBI" id="CHEBI:15378"/>
        <dbReference type="ChEBI" id="CHEBI:57540"/>
        <dbReference type="ChEBI" id="CHEBI:57688"/>
        <dbReference type="ChEBI" id="CHEBI:57945"/>
        <dbReference type="ChEBI" id="CHEBI:58758"/>
        <dbReference type="EC" id="1.1.1.284"/>
    </reaction>
</comment>
<comment type="catalytic activity">
    <reaction evidence="2">
        <text>a primary alcohol + NAD(+) = an aldehyde + NADH + H(+)</text>
        <dbReference type="Rhea" id="RHEA:10736"/>
        <dbReference type="ChEBI" id="CHEBI:15378"/>
        <dbReference type="ChEBI" id="CHEBI:15734"/>
        <dbReference type="ChEBI" id="CHEBI:17478"/>
        <dbReference type="ChEBI" id="CHEBI:57540"/>
        <dbReference type="ChEBI" id="CHEBI:57945"/>
        <dbReference type="EC" id="1.1.1.1"/>
    </reaction>
</comment>
<comment type="catalytic activity">
    <reaction evidence="2">
        <text>a secondary alcohol + NAD(+) = a ketone + NADH + H(+)</text>
        <dbReference type="Rhea" id="RHEA:10740"/>
        <dbReference type="ChEBI" id="CHEBI:15378"/>
        <dbReference type="ChEBI" id="CHEBI:17087"/>
        <dbReference type="ChEBI" id="CHEBI:35681"/>
        <dbReference type="ChEBI" id="CHEBI:57540"/>
        <dbReference type="ChEBI" id="CHEBI:57945"/>
        <dbReference type="EC" id="1.1.1.1"/>
    </reaction>
</comment>
<comment type="catalytic activity">
    <reaction evidence="2">
        <text>S-nitrosoglutathione + NADH + H(+) = S-(hydroxysulfenamide)glutathione + NAD(+)</text>
        <dbReference type="Rhea" id="RHEA:78371"/>
        <dbReference type="ChEBI" id="CHEBI:15378"/>
        <dbReference type="ChEBI" id="CHEBI:57540"/>
        <dbReference type="ChEBI" id="CHEBI:57945"/>
        <dbReference type="ChEBI" id="CHEBI:145544"/>
        <dbReference type="ChEBI" id="CHEBI:229723"/>
    </reaction>
    <physiologicalReaction direction="left-to-right" evidence="2">
        <dbReference type="Rhea" id="RHEA:78372"/>
    </physiologicalReaction>
</comment>
<comment type="cofactor">
    <cofactor evidence="1">
        <name>Zn(2+)</name>
        <dbReference type="ChEBI" id="CHEBI:29105"/>
    </cofactor>
    <text evidence="1">Binds 2 Zn(2+) ions per subunit.</text>
</comment>
<comment type="subunit">
    <text evidence="2">Homodimer.</text>
</comment>
<comment type="subcellular location">
    <subcellularLocation>
        <location evidence="2">Cytoplasm</location>
    </subcellularLocation>
</comment>
<comment type="similarity">
    <text evidence="3">Belongs to the zinc-containing alcohol dehydrogenase family. Class-III subfamily.</text>
</comment>
<feature type="chain" id="PRO_0000341289" description="S-(hydroxymethyl)glutathione dehydrogenase">
    <location>
        <begin position="1"/>
        <end position="369"/>
    </location>
</feature>
<feature type="binding site" evidence="1">
    <location>
        <position position="40"/>
    </location>
    <ligand>
        <name>Zn(2+)</name>
        <dbReference type="ChEBI" id="CHEBI:29105"/>
        <label>1</label>
        <note>catalytic</note>
    </ligand>
</feature>
<feature type="binding site" evidence="1">
    <location>
        <position position="62"/>
    </location>
    <ligand>
        <name>Zn(2+)</name>
        <dbReference type="ChEBI" id="CHEBI:29105"/>
        <label>1</label>
        <note>catalytic</note>
    </ligand>
</feature>
<feature type="binding site" evidence="1">
    <location>
        <position position="92"/>
    </location>
    <ligand>
        <name>Zn(2+)</name>
        <dbReference type="ChEBI" id="CHEBI:29105"/>
        <label>2</label>
    </ligand>
</feature>
<feature type="binding site" evidence="1">
    <location>
        <position position="95"/>
    </location>
    <ligand>
        <name>Zn(2+)</name>
        <dbReference type="ChEBI" id="CHEBI:29105"/>
        <label>2</label>
    </ligand>
</feature>
<feature type="binding site" evidence="1">
    <location>
        <position position="98"/>
    </location>
    <ligand>
        <name>Zn(2+)</name>
        <dbReference type="ChEBI" id="CHEBI:29105"/>
        <label>2</label>
    </ligand>
</feature>
<feature type="binding site" evidence="1">
    <location>
        <position position="106"/>
    </location>
    <ligand>
        <name>Zn(2+)</name>
        <dbReference type="ChEBI" id="CHEBI:29105"/>
        <label>2</label>
    </ligand>
</feature>
<feature type="binding site" evidence="1">
    <location>
        <position position="169"/>
    </location>
    <ligand>
        <name>Zn(2+)</name>
        <dbReference type="ChEBI" id="CHEBI:29105"/>
        <label>1</label>
        <note>catalytic</note>
    </ligand>
</feature>
<proteinExistence type="inferred from homology"/>
<accession>Q8FKG1</accession>
<reference key="1">
    <citation type="journal article" date="2002" name="Proc. Natl. Acad. Sci. U.S.A.">
        <title>Extensive mosaic structure revealed by the complete genome sequence of uropathogenic Escherichia coli.</title>
        <authorList>
            <person name="Welch R.A."/>
            <person name="Burland V."/>
            <person name="Plunkett G. III"/>
            <person name="Redford P."/>
            <person name="Roesch P."/>
            <person name="Rasko D."/>
            <person name="Buckles E.L."/>
            <person name="Liou S.-R."/>
            <person name="Boutin A."/>
            <person name="Hackett J."/>
            <person name="Stroud D."/>
            <person name="Mayhew G.F."/>
            <person name="Rose D.J."/>
            <person name="Zhou S."/>
            <person name="Schwartz D.C."/>
            <person name="Perna N.T."/>
            <person name="Mobley H.L.T."/>
            <person name="Donnenberg M.S."/>
            <person name="Blattner F.R."/>
        </authorList>
    </citation>
    <scope>NUCLEOTIDE SEQUENCE [LARGE SCALE GENOMIC DNA]</scope>
    <source>
        <strain>CFT073 / ATCC 700928 / UPEC</strain>
    </source>
</reference>
<evidence type="ECO:0000250" key="1">
    <source>
        <dbReference type="UniProtKB" id="P11766"/>
    </source>
</evidence>
<evidence type="ECO:0000250" key="2">
    <source>
        <dbReference type="UniProtKB" id="P25437"/>
    </source>
</evidence>
<evidence type="ECO:0000305" key="3"/>
<organism>
    <name type="scientific">Escherichia coli O6:H1 (strain CFT073 / ATCC 700928 / UPEC)</name>
    <dbReference type="NCBI Taxonomy" id="199310"/>
    <lineage>
        <taxon>Bacteria</taxon>
        <taxon>Pseudomonadati</taxon>
        <taxon>Pseudomonadota</taxon>
        <taxon>Gammaproteobacteria</taxon>
        <taxon>Enterobacterales</taxon>
        <taxon>Enterobacteriaceae</taxon>
        <taxon>Escherichia</taxon>
    </lineage>
</organism>
<keyword id="KW-0963">Cytoplasm</keyword>
<keyword id="KW-0479">Metal-binding</keyword>
<keyword id="KW-0520">NAD</keyword>
<keyword id="KW-0560">Oxidoreductase</keyword>
<keyword id="KW-1185">Reference proteome</keyword>
<keyword id="KW-0862">Zinc</keyword>
<protein>
    <recommendedName>
        <fullName>S-(hydroxymethyl)glutathione dehydrogenase</fullName>
        <ecNumber>1.1.1.284</ecNumber>
    </recommendedName>
    <alternativeName>
        <fullName>Alcohol dehydrogenase class-3</fullName>
        <ecNumber>1.1.1.1</ecNumber>
    </alternativeName>
    <alternativeName>
        <fullName>Alcohol dehydrogenase class-III</fullName>
    </alternativeName>
    <alternativeName>
        <fullName>Glutathione-dependent formaldehyde dehydrogenase</fullName>
        <shortName>FALDH</shortName>
        <shortName>FDH</shortName>
        <shortName>GSH-FDH</shortName>
        <ecNumber>1.1.1.-</ecNumber>
    </alternativeName>
</protein>
<dbReference type="EC" id="1.1.1.284"/>
<dbReference type="EC" id="1.1.1.1"/>
<dbReference type="EC" id="1.1.1.-"/>
<dbReference type="EMBL" id="AE014075">
    <property type="protein sequence ID" value="AAN78943.1"/>
    <property type="molecule type" value="Genomic_DNA"/>
</dbReference>
<dbReference type="RefSeq" id="WP_000842116.1">
    <property type="nucleotide sequence ID" value="NC_004431.1"/>
</dbReference>
<dbReference type="STRING" id="199310.c0465"/>
<dbReference type="KEGG" id="ecc:c0465"/>
<dbReference type="eggNOG" id="COG1062">
    <property type="taxonomic scope" value="Bacteria"/>
</dbReference>
<dbReference type="HOGENOM" id="CLU_026673_14_0_6"/>
<dbReference type="BioCyc" id="ECOL199310:C0465-MONOMER"/>
<dbReference type="Proteomes" id="UP000001410">
    <property type="component" value="Chromosome"/>
</dbReference>
<dbReference type="GO" id="GO:0005829">
    <property type="term" value="C:cytosol"/>
    <property type="evidence" value="ECO:0007669"/>
    <property type="project" value="TreeGrafter"/>
</dbReference>
<dbReference type="GO" id="GO:0004022">
    <property type="term" value="F:alcohol dehydrogenase (NAD+) activity"/>
    <property type="evidence" value="ECO:0007669"/>
    <property type="project" value="UniProtKB-EC"/>
</dbReference>
<dbReference type="GO" id="GO:0106322">
    <property type="term" value="F:S-(hydroxymethyl)glutathione dehydrogenase (NAD+) activity"/>
    <property type="evidence" value="ECO:0007669"/>
    <property type="project" value="RHEA"/>
</dbReference>
<dbReference type="GO" id="GO:0106321">
    <property type="term" value="F:S-(hydroxymethyl)glutathione dehydrogenase (NADP+) activity"/>
    <property type="evidence" value="ECO:0007669"/>
    <property type="project" value="RHEA"/>
</dbReference>
<dbReference type="GO" id="GO:0080007">
    <property type="term" value="F:S-nitrosoglutathione reductase (NADH) activity"/>
    <property type="evidence" value="ECO:0007669"/>
    <property type="project" value="RHEA"/>
</dbReference>
<dbReference type="GO" id="GO:0008270">
    <property type="term" value="F:zinc ion binding"/>
    <property type="evidence" value="ECO:0007669"/>
    <property type="project" value="InterPro"/>
</dbReference>
<dbReference type="GO" id="GO:0046294">
    <property type="term" value="P:formaldehyde catabolic process"/>
    <property type="evidence" value="ECO:0007669"/>
    <property type="project" value="InterPro"/>
</dbReference>
<dbReference type="CDD" id="cd08300">
    <property type="entry name" value="alcohol_DH_class_III"/>
    <property type="match status" value="1"/>
</dbReference>
<dbReference type="FunFam" id="3.40.50.720:FF:000003">
    <property type="entry name" value="S-(hydroxymethyl)glutathione dehydrogenase"/>
    <property type="match status" value="1"/>
</dbReference>
<dbReference type="FunFam" id="3.90.180.10:FF:000001">
    <property type="entry name" value="S-(hydroxymethyl)glutathione dehydrogenase"/>
    <property type="match status" value="1"/>
</dbReference>
<dbReference type="Gene3D" id="3.90.180.10">
    <property type="entry name" value="Medium-chain alcohol dehydrogenases, catalytic domain"/>
    <property type="match status" value="1"/>
</dbReference>
<dbReference type="Gene3D" id="3.40.50.720">
    <property type="entry name" value="NAD(P)-binding Rossmann-like Domain"/>
    <property type="match status" value="1"/>
</dbReference>
<dbReference type="InterPro" id="IPR013149">
    <property type="entry name" value="ADH-like_C"/>
</dbReference>
<dbReference type="InterPro" id="IPR013154">
    <property type="entry name" value="ADH-like_N"/>
</dbReference>
<dbReference type="InterPro" id="IPR014183">
    <property type="entry name" value="ADH_3"/>
</dbReference>
<dbReference type="InterPro" id="IPR002328">
    <property type="entry name" value="ADH_Zn_CS"/>
</dbReference>
<dbReference type="InterPro" id="IPR011032">
    <property type="entry name" value="GroES-like_sf"/>
</dbReference>
<dbReference type="InterPro" id="IPR036291">
    <property type="entry name" value="NAD(P)-bd_dom_sf"/>
</dbReference>
<dbReference type="InterPro" id="IPR020843">
    <property type="entry name" value="PKS_ER"/>
</dbReference>
<dbReference type="NCBIfam" id="TIGR02818">
    <property type="entry name" value="adh_III_F_hyde"/>
    <property type="match status" value="1"/>
</dbReference>
<dbReference type="PANTHER" id="PTHR43880">
    <property type="entry name" value="ALCOHOL DEHYDROGENASE"/>
    <property type="match status" value="1"/>
</dbReference>
<dbReference type="PANTHER" id="PTHR43880:SF12">
    <property type="entry name" value="ALCOHOL DEHYDROGENASE CLASS-3"/>
    <property type="match status" value="1"/>
</dbReference>
<dbReference type="Pfam" id="PF08240">
    <property type="entry name" value="ADH_N"/>
    <property type="match status" value="1"/>
</dbReference>
<dbReference type="Pfam" id="PF00107">
    <property type="entry name" value="ADH_zinc_N"/>
    <property type="match status" value="1"/>
</dbReference>
<dbReference type="SMART" id="SM00829">
    <property type="entry name" value="PKS_ER"/>
    <property type="match status" value="1"/>
</dbReference>
<dbReference type="SUPFAM" id="SSF50129">
    <property type="entry name" value="GroES-like"/>
    <property type="match status" value="2"/>
</dbReference>
<dbReference type="SUPFAM" id="SSF51735">
    <property type="entry name" value="NAD(P)-binding Rossmann-fold domains"/>
    <property type="match status" value="1"/>
</dbReference>
<dbReference type="PROSITE" id="PS00059">
    <property type="entry name" value="ADH_ZINC"/>
    <property type="match status" value="1"/>
</dbReference>
<sequence>MKSRAAVAFAPGKPLEIVEIDVAPPKKGEVLIKVTHTGVCHTDAFTLSGDDPEGVFPVVLGHEGAGVVVEVGEGVTSVKPGDHVIPLYTEXCGECEFCRSGKTNLCVAVRETQGKGLMPDGTTRFSYNGQPLYHYMGCSTFSEYTVVAEVSLAKINPEANHEHVCLLGCGVTTGIGAVHNTAKVQPGDSVAVFGLGAIGLAVVQGARQAKAGRIIAIDTNPKKFELARRFGATDCINPNDYDKPIKDVLLDINKWGIDHTFECIGNVNVMRAALESAHRGWGQSVIIGVAGSGQEISTRPFQLVTGRVWKGSAFGGVKGRSQLPGMVEDAMKGDIDLEPFVTHTMSLDEINDAFDLMHEGKSIRTVIRY</sequence>
<name>FRMA_ECOL6</name>
<gene>
    <name type="primary">frmA</name>
    <name type="ordered locus">c0465</name>
</gene>